<protein>
    <recommendedName>
        <fullName>Putative BTB/POZ domain and WD-repeat protein R731</fullName>
    </recommendedName>
</protein>
<dbReference type="EMBL" id="AY653733">
    <property type="protein sequence ID" value="AAV50991.1"/>
    <property type="molecule type" value="Genomic_DNA"/>
</dbReference>
<dbReference type="SMR" id="Q5UNY1"/>
<dbReference type="KEGG" id="vg:9925386"/>
<dbReference type="OrthoDB" id="7868at10239"/>
<dbReference type="Proteomes" id="UP000001134">
    <property type="component" value="Genome"/>
</dbReference>
<dbReference type="CDD" id="cd18186">
    <property type="entry name" value="BTB_POZ_ZBTB_KLHL-like"/>
    <property type="match status" value="1"/>
</dbReference>
<dbReference type="Gene3D" id="3.30.710.10">
    <property type="entry name" value="Potassium Channel Kv1.1, Chain A"/>
    <property type="match status" value="1"/>
</dbReference>
<dbReference type="Gene3D" id="2.130.10.10">
    <property type="entry name" value="YVTN repeat-like/Quinoprotein amine dehydrogenase"/>
    <property type="match status" value="1"/>
</dbReference>
<dbReference type="InterPro" id="IPR000210">
    <property type="entry name" value="BTB/POZ_dom"/>
</dbReference>
<dbReference type="InterPro" id="IPR011047">
    <property type="entry name" value="Quinoprotein_ADH-like_sf"/>
</dbReference>
<dbReference type="InterPro" id="IPR011333">
    <property type="entry name" value="SKP1/BTB/POZ_sf"/>
</dbReference>
<dbReference type="InterPro" id="IPR015943">
    <property type="entry name" value="WD40/YVTN_repeat-like_dom_sf"/>
</dbReference>
<dbReference type="Pfam" id="PF00651">
    <property type="entry name" value="BTB"/>
    <property type="match status" value="1"/>
</dbReference>
<dbReference type="SUPFAM" id="SSF54695">
    <property type="entry name" value="POZ domain"/>
    <property type="match status" value="1"/>
</dbReference>
<dbReference type="SUPFAM" id="SSF50998">
    <property type="entry name" value="Quinoprotein alcohol dehydrogenase-like"/>
    <property type="match status" value="1"/>
</dbReference>
<dbReference type="PROSITE" id="PS50097">
    <property type="entry name" value="BTB"/>
    <property type="match status" value="1"/>
</dbReference>
<comment type="similarity">
    <text evidence="3">Belongs to the mimivirus BTB/WD family.</text>
</comment>
<proteinExistence type="inferred from homology"/>
<evidence type="ECO:0000255" key="1">
    <source>
        <dbReference type="PROSITE-ProRule" id="PRU00037"/>
    </source>
</evidence>
<evidence type="ECO:0000256" key="2">
    <source>
        <dbReference type="SAM" id="MobiDB-lite"/>
    </source>
</evidence>
<evidence type="ECO:0000305" key="3"/>
<reference key="1">
    <citation type="journal article" date="2004" name="Science">
        <title>The 1.2-megabase genome sequence of Mimivirus.</title>
        <authorList>
            <person name="Raoult D."/>
            <person name="Audic S."/>
            <person name="Robert C."/>
            <person name="Abergel C."/>
            <person name="Renesto P."/>
            <person name="Ogata H."/>
            <person name="La Scola B."/>
            <person name="Susan M."/>
            <person name="Claverie J.-M."/>
        </authorList>
    </citation>
    <scope>NUCLEOTIDE SEQUENCE [LARGE SCALE GENOMIC DNA]</scope>
    <source>
        <strain>Rowbotham-Bradford</strain>
    </source>
</reference>
<feature type="chain" id="PRO_0000186242" description="Putative BTB/POZ domain and WD-repeat protein R731">
    <location>
        <begin position="1"/>
        <end position="518"/>
    </location>
</feature>
<feature type="domain" description="BTB" evidence="1">
    <location>
        <begin position="22"/>
        <end position="92"/>
    </location>
</feature>
<feature type="repeat" description="WD 1">
    <location>
        <begin position="391"/>
        <end position="430"/>
    </location>
</feature>
<feature type="repeat" description="WD 2">
    <location>
        <begin position="437"/>
        <end position="475"/>
    </location>
</feature>
<feature type="region of interest" description="Disordered" evidence="2">
    <location>
        <begin position="224"/>
        <end position="246"/>
    </location>
</feature>
<feature type="compositionally biased region" description="Acidic residues" evidence="2">
    <location>
        <begin position="228"/>
        <end position="246"/>
    </location>
</feature>
<keyword id="KW-1185">Reference proteome</keyword>
<keyword id="KW-0677">Repeat</keyword>
<keyword id="KW-0853">WD repeat</keyword>
<organismHost>
    <name type="scientific">Acanthamoeba polyphaga</name>
    <name type="common">Amoeba</name>
    <dbReference type="NCBI Taxonomy" id="5757"/>
</organismHost>
<sequence length="518" mass="59980">MIYHINMDKHSLIDLYNNEVLTDCQLHLTDSIETIVMNVHKNILYMSCPYFKSMFTNFREQKSSTVKLDVHNARITYDIVKSFYGFPLEEPNWKYQIDTHIVKDFLLLETGLENINLLPIPAEDFDNFIDVVDKIGYNEFCLKKIIDNIPDNYDLSKFPLDLLNGLLAVCFKYDLHISRETGVYIWSFKYNKLVLSYFDSSIIDIEQTFDGGFYFSSSTIIDSNHEESSDDEVNDDEDTDNEDTDDEGYCQISLFKFNISRTNDKYEASILNTGLKIIGPIAYSKHFNQVFIVTDKYNICVYDTDIKNLVNKFVFNDTIEIIAPIKDKMVVVTSIQIIILNLLDGKNLSKIDSNTNIISYNSNLGVFAYINNNTNVCIYSLESLSITTNINHSTTINHILYSPKSKYFIFCDENSIIYVYSTKDNYSLIKTIDFKKFLKFGVKDFEFMTSKIIVAIDIKGKICIWNIETEQIIQNIDCSEDYNNIYNIQKINGPDYSIHKKISKIIQEKTQSKLSISS</sequence>
<gene>
    <name type="ordered locus">MIMI_R731</name>
</gene>
<organism>
    <name type="scientific">Acanthamoeba polyphaga mimivirus</name>
    <name type="common">APMV</name>
    <dbReference type="NCBI Taxonomy" id="212035"/>
    <lineage>
        <taxon>Viruses</taxon>
        <taxon>Varidnaviria</taxon>
        <taxon>Bamfordvirae</taxon>
        <taxon>Nucleocytoviricota</taxon>
        <taxon>Megaviricetes</taxon>
        <taxon>Imitervirales</taxon>
        <taxon>Mimiviridae</taxon>
        <taxon>Megamimivirinae</taxon>
        <taxon>Mimivirus</taxon>
        <taxon>Mimivirus bradfordmassiliense</taxon>
    </lineage>
</organism>
<accession>Q5UNY1</accession>
<name>YR731_MIMIV</name>